<dbReference type="EC" id="1.97.1.12" evidence="1"/>
<dbReference type="EMBL" id="AJ316582">
    <property type="protein sequence ID" value="CAC88044.1"/>
    <property type="molecule type" value="Genomic_DNA"/>
</dbReference>
<dbReference type="RefSeq" id="NP_783232.1">
    <property type="nucleotide sequence ID" value="NC_004561.1"/>
</dbReference>
<dbReference type="SMR" id="Q8S8X4"/>
<dbReference type="GeneID" id="806475"/>
<dbReference type="GO" id="GO:0009535">
    <property type="term" value="C:chloroplast thylakoid membrane"/>
    <property type="evidence" value="ECO:0007669"/>
    <property type="project" value="UniProtKB-SubCell"/>
</dbReference>
<dbReference type="GO" id="GO:0009522">
    <property type="term" value="C:photosystem I"/>
    <property type="evidence" value="ECO:0007669"/>
    <property type="project" value="UniProtKB-KW"/>
</dbReference>
<dbReference type="GO" id="GO:0051539">
    <property type="term" value="F:4 iron, 4 sulfur cluster binding"/>
    <property type="evidence" value="ECO:0007669"/>
    <property type="project" value="UniProtKB-KW"/>
</dbReference>
<dbReference type="GO" id="GO:0016168">
    <property type="term" value="F:chlorophyll binding"/>
    <property type="evidence" value="ECO:0007669"/>
    <property type="project" value="UniProtKB-KW"/>
</dbReference>
<dbReference type="GO" id="GO:0009055">
    <property type="term" value="F:electron transfer activity"/>
    <property type="evidence" value="ECO:0007669"/>
    <property type="project" value="UniProtKB-UniRule"/>
</dbReference>
<dbReference type="GO" id="GO:0000287">
    <property type="term" value="F:magnesium ion binding"/>
    <property type="evidence" value="ECO:0007669"/>
    <property type="project" value="UniProtKB-UniRule"/>
</dbReference>
<dbReference type="GO" id="GO:0016491">
    <property type="term" value="F:oxidoreductase activity"/>
    <property type="evidence" value="ECO:0007669"/>
    <property type="project" value="UniProtKB-KW"/>
</dbReference>
<dbReference type="GO" id="GO:0015979">
    <property type="term" value="P:photosynthesis"/>
    <property type="evidence" value="ECO:0007669"/>
    <property type="project" value="UniProtKB-UniRule"/>
</dbReference>
<dbReference type="FunFam" id="1.20.1130.10:FF:000001">
    <property type="entry name" value="Photosystem I P700 chlorophyll a apoprotein A2"/>
    <property type="match status" value="1"/>
</dbReference>
<dbReference type="Gene3D" id="1.20.1130.10">
    <property type="entry name" value="Photosystem I PsaA/PsaB"/>
    <property type="match status" value="1"/>
</dbReference>
<dbReference type="HAMAP" id="MF_00458">
    <property type="entry name" value="PSI_PsaA"/>
    <property type="match status" value="1"/>
</dbReference>
<dbReference type="InterPro" id="IPR006243">
    <property type="entry name" value="PSI_PsaA"/>
</dbReference>
<dbReference type="InterPro" id="IPR001280">
    <property type="entry name" value="PSI_PsaA/B"/>
</dbReference>
<dbReference type="InterPro" id="IPR020586">
    <property type="entry name" value="PSI_PsaA/B_CS"/>
</dbReference>
<dbReference type="InterPro" id="IPR036408">
    <property type="entry name" value="PSI_PsaA/B_sf"/>
</dbReference>
<dbReference type="NCBIfam" id="TIGR01335">
    <property type="entry name" value="psaA"/>
    <property type="match status" value="1"/>
</dbReference>
<dbReference type="PANTHER" id="PTHR30128">
    <property type="entry name" value="OUTER MEMBRANE PROTEIN, OMPA-RELATED"/>
    <property type="match status" value="1"/>
</dbReference>
<dbReference type="PANTHER" id="PTHR30128:SF19">
    <property type="entry name" value="PHOTOSYSTEM I P700 CHLOROPHYLL A APOPROTEIN A1-RELATED"/>
    <property type="match status" value="1"/>
</dbReference>
<dbReference type="Pfam" id="PF00223">
    <property type="entry name" value="PsaA_PsaB"/>
    <property type="match status" value="1"/>
</dbReference>
<dbReference type="PIRSF" id="PIRSF002905">
    <property type="entry name" value="PSI_A"/>
    <property type="match status" value="1"/>
</dbReference>
<dbReference type="PRINTS" id="PR00257">
    <property type="entry name" value="PHOTSYSPSAAB"/>
</dbReference>
<dbReference type="SUPFAM" id="SSF81558">
    <property type="entry name" value="Photosystem I subunits PsaA/PsaB"/>
    <property type="match status" value="1"/>
</dbReference>
<dbReference type="PROSITE" id="PS00419">
    <property type="entry name" value="PHOTOSYSTEM_I_PSAAB"/>
    <property type="match status" value="1"/>
</dbReference>
<protein>
    <recommendedName>
        <fullName evidence="1">Photosystem I P700 chlorophyll a apoprotein A1</fullName>
        <ecNumber evidence="1">1.97.1.12</ecNumber>
    </recommendedName>
    <alternativeName>
        <fullName evidence="1">PSI-A</fullName>
    </alternativeName>
    <alternativeName>
        <fullName evidence="1">PsaA</fullName>
    </alternativeName>
</protein>
<evidence type="ECO:0000255" key="1">
    <source>
        <dbReference type="HAMAP-Rule" id="MF_00458"/>
    </source>
</evidence>
<comment type="function">
    <text>PsaA and PsaB bind P700, the primary electron donor of photosystem I (PSI), as well as the electron acceptors A0, A1 and FX. PSI is a plastocyanin-ferredoxin oxidoreductase, converting photonic excitation into a charge separation, which transfers an electron from the donor P700 chlorophyll pair to the spectroscopically characterized acceptors A0, A1, FX, FA and FB in turn. Oxidized P700 is reduced on the lumenal side of the thylakoid membrane by plastocyanin.</text>
</comment>
<comment type="catalytic activity">
    <reaction evidence="1">
        <text>reduced [plastocyanin] + hnu + oxidized [2Fe-2S]-[ferredoxin] = oxidized [plastocyanin] + reduced [2Fe-2S]-[ferredoxin]</text>
        <dbReference type="Rhea" id="RHEA:30407"/>
        <dbReference type="Rhea" id="RHEA-COMP:10000"/>
        <dbReference type="Rhea" id="RHEA-COMP:10001"/>
        <dbReference type="Rhea" id="RHEA-COMP:10039"/>
        <dbReference type="Rhea" id="RHEA-COMP:10040"/>
        <dbReference type="ChEBI" id="CHEBI:29036"/>
        <dbReference type="ChEBI" id="CHEBI:30212"/>
        <dbReference type="ChEBI" id="CHEBI:33737"/>
        <dbReference type="ChEBI" id="CHEBI:33738"/>
        <dbReference type="ChEBI" id="CHEBI:49552"/>
        <dbReference type="EC" id="1.97.1.12"/>
    </reaction>
</comment>
<comment type="cofactor">
    <text evidence="1">P700 is a chlorophyll a/chlorophyll a' dimer, A0 is one or more chlorophyll a, A1 is one or both phylloquinones and FX is a shared 4Fe-4S iron-sulfur center.</text>
</comment>
<comment type="subunit">
    <text evidence="1">The PsaA/B heterodimer binds the P700 chlorophyll special pair and subsequent electron acceptors. PSI consists of a core antenna complex that captures photons, and an electron transfer chain that converts photonic excitation into a charge separation. The eukaryotic PSI reaction center is composed of at least 11 subunits.</text>
</comment>
<comment type="subcellular location">
    <subcellularLocation>
        <location evidence="1">Plastid</location>
        <location evidence="1">Chloroplast thylakoid membrane</location>
        <topology evidence="1">Multi-pass membrane protein</topology>
    </subcellularLocation>
</comment>
<comment type="similarity">
    <text evidence="1">Belongs to the PsaA/PsaB family.</text>
</comment>
<accession>Q8S8X4</accession>
<proteinExistence type="inferred from homology"/>
<organism>
    <name type="scientific">Atropa belladonna</name>
    <name type="common">Belladonna</name>
    <name type="synonym">Deadly nightshade</name>
    <dbReference type="NCBI Taxonomy" id="33113"/>
    <lineage>
        <taxon>Eukaryota</taxon>
        <taxon>Viridiplantae</taxon>
        <taxon>Streptophyta</taxon>
        <taxon>Embryophyta</taxon>
        <taxon>Tracheophyta</taxon>
        <taxon>Spermatophyta</taxon>
        <taxon>Magnoliopsida</taxon>
        <taxon>eudicotyledons</taxon>
        <taxon>Gunneridae</taxon>
        <taxon>Pentapetalae</taxon>
        <taxon>asterids</taxon>
        <taxon>lamiids</taxon>
        <taxon>Solanales</taxon>
        <taxon>Solanaceae</taxon>
        <taxon>Solanoideae</taxon>
        <taxon>Hyoscyameae</taxon>
        <taxon>Atropa</taxon>
    </lineage>
</organism>
<sequence>MIIRSPEPEVKILVDRDPVKTSFEEWARPGHFSRTIAKGPDTTTWIWNLHADAHDFDSHTSDLEEISRKVFSAHFGQLSIIFLWLSGMYFHGARFSNYEAWLSDPTHIGPSAQVVWPIVGQEILNGDVRGGFRGIQITSGFFQIWRASGITSELQLYCTAIGALVFAALMLFAGWFHYHKAAPKLAWFQDVESMLNHHLAGLLGLGSLSWAGHQVHVSLPINQFLNAGVDPKEIPLPHEYILNRDLLAQLYPSFAEGATPFFTLNWSKYADFLTFRGGLDPVTGGLWLTDIAHHHLAIAILFLIAGHMYRTNWGIGHGLKDILEAHKGPFTGQGHKGLYEILTTSWHAQLSLNLAMLGSLTIVVAHHMYSMPPYPYLATDYGTQLSLFTHHMWIGGFLIVGAAAHAAIFMVRDYDPTTRYNDLLDRVLRHRDAIISHLNWACIFLGFHSFGLYIHNDTMSALGRPQDMFSDTAIQLQPVFAQWIQNTHALAPGATAPGATASTSLTWGGGDLVAVGGKVALLPIPLGTADFLVHHIHAFTIHVTVLILLKGVLFARSSRLIPDKANLGFRFPCDGPERGGTCQVSAWDHVFLGLFWMYNAISVVIFHFSWKMQSDVWGSVSDQGVVTHITGGNFAQSSITINGWLRDFLWAQASQVIQSYGSSLSAYGLFFLGAHFVWAFSLMFLFSGRGYWQELIESIVWAHNKLKVAPATQPRALSIIQGRAVGVTHYLLGGIATTWAFFLARIITVG</sequence>
<gene>
    <name evidence="1" type="primary">psaA</name>
</gene>
<name>PSAA_ATRBE</name>
<keyword id="KW-0004">4Fe-4S</keyword>
<keyword id="KW-0148">Chlorophyll</keyword>
<keyword id="KW-0150">Chloroplast</keyword>
<keyword id="KW-0157">Chromophore</keyword>
<keyword id="KW-0249">Electron transport</keyword>
<keyword id="KW-0408">Iron</keyword>
<keyword id="KW-0411">Iron-sulfur</keyword>
<keyword id="KW-0460">Magnesium</keyword>
<keyword id="KW-0472">Membrane</keyword>
<keyword id="KW-0479">Metal-binding</keyword>
<keyword id="KW-0560">Oxidoreductase</keyword>
<keyword id="KW-0602">Photosynthesis</keyword>
<keyword id="KW-0603">Photosystem I</keyword>
<keyword id="KW-0934">Plastid</keyword>
<keyword id="KW-0793">Thylakoid</keyword>
<keyword id="KW-0812">Transmembrane</keyword>
<keyword id="KW-1133">Transmembrane helix</keyword>
<keyword id="KW-0813">Transport</keyword>
<geneLocation type="chloroplast"/>
<feature type="chain" id="PRO_0000088536" description="Photosystem I P700 chlorophyll a apoprotein A1">
    <location>
        <begin position="1"/>
        <end position="750"/>
    </location>
</feature>
<feature type="transmembrane region" description="Helical; Name=I" evidence="1">
    <location>
        <begin position="70"/>
        <end position="93"/>
    </location>
</feature>
<feature type="transmembrane region" description="Helical; Name=II" evidence="1">
    <location>
        <begin position="156"/>
        <end position="179"/>
    </location>
</feature>
<feature type="transmembrane region" description="Helical; Name=III" evidence="1">
    <location>
        <begin position="195"/>
        <end position="219"/>
    </location>
</feature>
<feature type="transmembrane region" description="Helical; Name=IV" evidence="1">
    <location>
        <begin position="291"/>
        <end position="309"/>
    </location>
</feature>
<feature type="transmembrane region" description="Helical; Name=V" evidence="1">
    <location>
        <begin position="346"/>
        <end position="369"/>
    </location>
</feature>
<feature type="transmembrane region" description="Helical; Name=VI" evidence="1">
    <location>
        <begin position="385"/>
        <end position="411"/>
    </location>
</feature>
<feature type="transmembrane region" description="Helical; Name=VII" evidence="1">
    <location>
        <begin position="433"/>
        <end position="455"/>
    </location>
</feature>
<feature type="transmembrane region" description="Helical; Name=VIII" evidence="1">
    <location>
        <begin position="531"/>
        <end position="549"/>
    </location>
</feature>
<feature type="transmembrane region" description="Helical; Name=IX" evidence="1">
    <location>
        <begin position="589"/>
        <end position="610"/>
    </location>
</feature>
<feature type="transmembrane region" description="Helical; Name=X" evidence="1">
    <location>
        <begin position="664"/>
        <end position="686"/>
    </location>
</feature>
<feature type="transmembrane region" description="Helical; Name=XI" evidence="1">
    <location>
        <begin position="724"/>
        <end position="744"/>
    </location>
</feature>
<feature type="binding site" evidence="1">
    <location>
        <position position="573"/>
    </location>
    <ligand>
        <name>[4Fe-4S] cluster</name>
        <dbReference type="ChEBI" id="CHEBI:49883"/>
        <note>ligand shared between dimeric partners</note>
    </ligand>
</feature>
<feature type="binding site" evidence="1">
    <location>
        <position position="582"/>
    </location>
    <ligand>
        <name>[4Fe-4S] cluster</name>
        <dbReference type="ChEBI" id="CHEBI:49883"/>
        <note>ligand shared between dimeric partners</note>
    </ligand>
</feature>
<feature type="binding site" description="axial binding residue" evidence="1">
    <location>
        <position position="675"/>
    </location>
    <ligand>
        <name>chlorophyll a'</name>
        <dbReference type="ChEBI" id="CHEBI:189419"/>
        <label>A1</label>
    </ligand>
    <ligandPart>
        <name>Mg</name>
        <dbReference type="ChEBI" id="CHEBI:25107"/>
    </ligandPart>
</feature>
<feature type="binding site" description="axial binding residue" evidence="1">
    <location>
        <position position="683"/>
    </location>
    <ligand>
        <name>chlorophyll a</name>
        <dbReference type="ChEBI" id="CHEBI:58416"/>
        <label>A3</label>
    </ligand>
    <ligandPart>
        <name>Mg</name>
        <dbReference type="ChEBI" id="CHEBI:25107"/>
    </ligandPart>
</feature>
<feature type="binding site" evidence="1">
    <location>
        <position position="691"/>
    </location>
    <ligand>
        <name>chlorophyll a</name>
        <dbReference type="ChEBI" id="CHEBI:58416"/>
        <label>A3</label>
    </ligand>
</feature>
<feature type="binding site" evidence="1">
    <location>
        <position position="692"/>
    </location>
    <ligand>
        <name>phylloquinone</name>
        <dbReference type="ChEBI" id="CHEBI:18067"/>
        <label>A</label>
    </ligand>
</feature>
<reference key="1">
    <citation type="journal article" date="2002" name="Mol. Biol. Evol.">
        <title>The plastid chromosome of Atropa belladonna and its comparison with that of Nicotiana tabacum: the role of RNA editing in generating divergence in the process of plant speciation.</title>
        <authorList>
            <person name="Schmitz-Linneweber C."/>
            <person name="Regel R."/>
            <person name="Du T.G."/>
            <person name="Hupfer H."/>
            <person name="Herrmann R.G."/>
            <person name="Maier R.M."/>
        </authorList>
    </citation>
    <scope>NUCLEOTIDE SEQUENCE [LARGE SCALE GENOMIC DNA]</scope>
    <source>
        <strain>cv. Ab5p(kan)</strain>
    </source>
</reference>